<accession>P36716</accession>
<keyword id="KW-0167">Capsid protein</keyword>
<keyword id="KW-1165">Clathrin-mediated endocytosis of virus by host</keyword>
<keyword id="KW-1048">Host nucleus</keyword>
<keyword id="KW-0945">Host-virus interaction</keyword>
<keyword id="KW-0426">Late protein</keyword>
<keyword id="KW-1185">Reference proteome</keyword>
<keyword id="KW-1148">T=25 icosahedral capsid protein</keyword>
<keyword id="KW-1161">Viral attachment to host cell</keyword>
<keyword id="KW-1162">Viral penetration into host cytoplasm</keyword>
<keyword id="KW-0946">Virion</keyword>
<keyword id="KW-1164">Virus endocytosis by host</keyword>
<keyword id="KW-1160">Virus entry into host cell</keyword>
<comment type="function">
    <text evidence="1">Major capsid protein that self-associates to form penton base pentamers, each in the shape of a pentagon, situated at the 12 vertices of the pseudo T=25 capsid. Involved in virus secondary attachment to host cell after initial attachment by the fiber protein. Binds host integrin heterodimer ITGAV-ITGB5 (alphaV-beta5) thereby triggering clathrin-mediated endocytosis of virions. Mediates initial virus attachment to CXADR-negative cells. Binding to integrins ITGAV-ITGB5 also seems to induce macropinocytosis uptake of the virus. As the virus enters the host cell, penton proteins are shed concomitant with virion acidification in the endosome.</text>
</comment>
<comment type="subunit">
    <text evidence="1">Interacts (via the cell attachment site RGD) with host heterodimer ITGAV-ITGB5; this interaction promotes virus internalization. Interacts with host WWP1 and WWP2. Interacts with the fiber protein (via N-terminal tail region). Interacts with the capsid vertex protein; this interaction binds the penton base to neighboring peripentonal hexons.</text>
</comment>
<comment type="subcellular location">
    <subcellularLocation>
        <location evidence="1">Virion</location>
    </subcellularLocation>
    <subcellularLocation>
        <location evidence="1">Host nucleus</location>
    </subcellularLocation>
    <text evidence="1">Located at each vertex of the virion. Present in 60 copies per virion.</text>
</comment>
<comment type="induction">
    <text evidence="1">Expressed in the late phase of the viral replicative cycle.</text>
</comment>
<comment type="domain">
    <text evidence="1">The cell attachment RGD motif is exposed at the virion surface and is involved in binding to the integrin heterodimer ITGAV-ITGB5.</text>
</comment>
<comment type="miscellaneous">
    <text evidence="1">All late proteins expressed from the major late promoter are produced by alternative splicing and alternative polyadenylation of the same gene giving rise to non-overlapping ORFs. A leader sequence is present in the N-terminus of all these mRNAs and is recognized by the viral shutoff protein to provide expression although conventional translation via ribosome scanning from the cap has been shut off in the host cell.</text>
</comment>
<comment type="similarity">
    <text evidence="1">Belongs to the adenoviridae penton family.</text>
</comment>
<sequence length="497" mass="56394">MRRAVELQTVAFPETPPPSYETVMAAAPPYVPPRYLGPTEGRNSIRYSELSPLYDTTRVYLVDNKSSDIASLNYQNDHSNFLTTVVQNNDYSPIEAGTQTINFDERSRWGGDLKTILHTNMPNVNDFMFTTKFKARVMVARKTNNEGQTILEYEWAEFVLPEGNYSETMTIDLMNNAIIEHYLRVGRQHGVLESDIGVKFDTRNFRLGWDPETQLVTPGVYTNEAFHPDIVLLPGCGVDFTESRLSNILGIRKRQPFQEGFVIMYEHLEGGNIPALLDVKKYENSLQDQNTVRGDNFIALNKAARIEPVETDPKGRSYNLLPDKKNTKYRSWYLAYNYGDPEKGVRSWTLLTTPDVTGGSEQVYWSLPDMMQDPVTFRSSRQVSNYPVVAAELLPVHAKSFYNEQAVYSQLIRQSTALTRVFNRFPENQILVRPPAATITTVSENVPALTDHGTLPLRSSISGVQRVTITDARRRTCPYVYKALGIVSPRVLSSRTF</sequence>
<organism>
    <name type="scientific">Human adenovirus A serotype 12</name>
    <name type="common">HAdV-12</name>
    <name type="synonym">Human adenovirus 12</name>
    <dbReference type="NCBI Taxonomy" id="28282"/>
    <lineage>
        <taxon>Viruses</taxon>
        <taxon>Varidnaviria</taxon>
        <taxon>Bamfordvirae</taxon>
        <taxon>Preplasmiviricota</taxon>
        <taxon>Tectiliviricetes</taxon>
        <taxon>Rowavirales</taxon>
        <taxon>Adenoviridae</taxon>
        <taxon>Mastadenovirus</taxon>
        <taxon>Human mastadenovirus A</taxon>
    </lineage>
</organism>
<evidence type="ECO:0000255" key="1">
    <source>
        <dbReference type="HAMAP-Rule" id="MF_04052"/>
    </source>
</evidence>
<feature type="chain" id="PRO_0000221874" description="Penton protein">
    <location>
        <begin position="1"/>
        <end position="497"/>
    </location>
</feature>
<feature type="short sequence motif" description="Cell attachment site" evidence="1">
    <location>
        <begin position="293"/>
        <end position="295"/>
    </location>
</feature>
<gene>
    <name evidence="1" type="primary">L2</name>
</gene>
<protein>
    <recommendedName>
        <fullName evidence="1">Penton protein</fullName>
        <shortName evidence="1">CP-P</shortName>
    </recommendedName>
    <alternativeName>
        <fullName evidence="1">Penton base protein</fullName>
    </alternativeName>
    <alternativeName>
        <fullName evidence="1">Protein III</fullName>
    </alternativeName>
</protein>
<reference key="1">
    <citation type="journal article" date="1994" name="J. Virol.">
        <title>Nucleotide sequence of human adenovirus type 12 DNA: comparative functional analysis.</title>
        <authorList>
            <person name="Sprengel J."/>
            <person name="Schmitz B."/>
            <person name="Heuss-Neitzel D."/>
            <person name="Zock C."/>
            <person name="Doerfler W."/>
        </authorList>
    </citation>
    <scope>NUCLEOTIDE SEQUENCE [LARGE SCALE GENOMIC DNA]</scope>
</reference>
<organismHost>
    <name type="scientific">Homo sapiens</name>
    <name type="common">Human</name>
    <dbReference type="NCBI Taxonomy" id="9606"/>
</organismHost>
<name>CAPSP_ADE12</name>
<dbReference type="EMBL" id="X73487">
    <property type="protein sequence ID" value="CAA51887.1"/>
    <property type="molecule type" value="Genomic_DNA"/>
</dbReference>
<dbReference type="PIR" id="S33938">
    <property type="entry name" value="S33938"/>
</dbReference>
<dbReference type="RefSeq" id="NP_040920.1">
    <property type="nucleotide sequence ID" value="NC_001460.1"/>
</dbReference>
<dbReference type="SMR" id="P36716"/>
<dbReference type="GeneID" id="1460868"/>
<dbReference type="KEGG" id="vg:1460868"/>
<dbReference type="Proteomes" id="UP000004993">
    <property type="component" value="Genome"/>
</dbReference>
<dbReference type="GO" id="GO:0042025">
    <property type="term" value="C:host cell nucleus"/>
    <property type="evidence" value="ECO:0007669"/>
    <property type="project" value="UniProtKB-SubCell"/>
</dbReference>
<dbReference type="GO" id="GO:0039623">
    <property type="term" value="C:T=25 icosahedral viral capsid"/>
    <property type="evidence" value="ECO:0007669"/>
    <property type="project" value="UniProtKB-UniRule"/>
</dbReference>
<dbReference type="GO" id="GO:0005198">
    <property type="term" value="F:structural molecule activity"/>
    <property type="evidence" value="ECO:0007669"/>
    <property type="project" value="UniProtKB-UniRule"/>
</dbReference>
<dbReference type="GO" id="GO:0075512">
    <property type="term" value="P:clathrin-dependent endocytosis of virus by host cell"/>
    <property type="evidence" value="ECO:0007669"/>
    <property type="project" value="UniProtKB-KW"/>
</dbReference>
<dbReference type="GO" id="GO:0019062">
    <property type="term" value="P:virion attachment to host cell"/>
    <property type="evidence" value="ECO:0007669"/>
    <property type="project" value="UniProtKB-UniRule"/>
</dbReference>
<dbReference type="Gene3D" id="3.90.1620.10">
    <property type="entry name" value="adenovirus 2 penton base, domain 2"/>
    <property type="match status" value="1"/>
</dbReference>
<dbReference type="Gene3D" id="2.60.120.550">
    <property type="entry name" value="Penton protein, domain 1"/>
    <property type="match status" value="1"/>
</dbReference>
<dbReference type="HAMAP" id="MF_04052">
    <property type="entry name" value="ADV_CAPSP"/>
    <property type="match status" value="1"/>
</dbReference>
<dbReference type="InterPro" id="IPR002605">
    <property type="entry name" value="Adeno_Penton_B"/>
</dbReference>
<dbReference type="Pfam" id="PF01686">
    <property type="entry name" value="Adeno_Penton_B"/>
    <property type="match status" value="1"/>
</dbReference>
<proteinExistence type="inferred from homology"/>